<sequence length="263" mass="28563">MTRPVRLQDLRDYKKNNRPWAMLTTYDYSTTRAFVDAGIEVFLVGDSAANTMLGYSGTNQVSFEEMVMLTAAVVRGAGPAMVVADLPFGTYEASDEQAVRSATEMVRRTGAHVVKLEGGVRMASRIRAITDAGVPVCAHLGFTPQSMNQLSGFKVQRGAEKLTADVDAVVEAGAEMVVFEMVPADLAAELTARCPIPVIGIGAGNATDAQVLVWHDIANLPKGDHRARFVKTYAEVGSQLTCAARFYRKDVEARRFPAEEHTF</sequence>
<evidence type="ECO:0000255" key="1">
    <source>
        <dbReference type="HAMAP-Rule" id="MF_00156"/>
    </source>
</evidence>
<organism>
    <name type="scientific">Corynebacterium diphtheriae (strain ATCC 700971 / NCTC 13129 / Biotype gravis)</name>
    <dbReference type="NCBI Taxonomy" id="257309"/>
    <lineage>
        <taxon>Bacteria</taxon>
        <taxon>Bacillati</taxon>
        <taxon>Actinomycetota</taxon>
        <taxon>Actinomycetes</taxon>
        <taxon>Mycobacteriales</taxon>
        <taxon>Corynebacteriaceae</taxon>
        <taxon>Corynebacterium</taxon>
    </lineage>
</organism>
<keyword id="KW-0963">Cytoplasm</keyword>
<keyword id="KW-0460">Magnesium</keyword>
<keyword id="KW-0479">Metal-binding</keyword>
<keyword id="KW-0566">Pantothenate biosynthesis</keyword>
<keyword id="KW-1185">Reference proteome</keyword>
<keyword id="KW-0808">Transferase</keyword>
<comment type="function">
    <text evidence="1">Catalyzes the reversible reaction in which hydroxymethyl group from 5,10-methylenetetrahydrofolate is transferred onto alpha-ketoisovalerate to form ketopantoate.</text>
</comment>
<comment type="catalytic activity">
    <reaction evidence="1">
        <text>3-methyl-2-oxobutanoate + (6R)-5,10-methylene-5,6,7,8-tetrahydrofolate + H2O = 2-dehydropantoate + (6S)-5,6,7,8-tetrahydrofolate</text>
        <dbReference type="Rhea" id="RHEA:11824"/>
        <dbReference type="ChEBI" id="CHEBI:11561"/>
        <dbReference type="ChEBI" id="CHEBI:11851"/>
        <dbReference type="ChEBI" id="CHEBI:15377"/>
        <dbReference type="ChEBI" id="CHEBI:15636"/>
        <dbReference type="ChEBI" id="CHEBI:57453"/>
        <dbReference type="EC" id="2.1.2.11"/>
    </reaction>
</comment>
<comment type="cofactor">
    <cofactor evidence="1">
        <name>Mg(2+)</name>
        <dbReference type="ChEBI" id="CHEBI:18420"/>
    </cofactor>
    <text evidence="1">Binds 1 Mg(2+) ion per subunit.</text>
</comment>
<comment type="pathway">
    <text evidence="1">Cofactor biosynthesis; (R)-pantothenate biosynthesis; (R)-pantoate from 3-methyl-2-oxobutanoate: step 1/2.</text>
</comment>
<comment type="subunit">
    <text evidence="1">Homodecamer; pentamer of dimers.</text>
</comment>
<comment type="subcellular location">
    <subcellularLocation>
        <location evidence="1">Cytoplasm</location>
    </subcellularLocation>
</comment>
<comment type="similarity">
    <text evidence="1">Belongs to the PanB family.</text>
</comment>
<feature type="chain" id="PRO_0000297250" description="3-methyl-2-oxobutanoate hydroxymethyltransferase">
    <location>
        <begin position="1"/>
        <end position="263"/>
    </location>
</feature>
<feature type="active site" description="Proton acceptor" evidence="1">
    <location>
        <position position="180"/>
    </location>
</feature>
<feature type="binding site" evidence="1">
    <location>
        <begin position="46"/>
        <end position="47"/>
    </location>
    <ligand>
        <name>3-methyl-2-oxobutanoate</name>
        <dbReference type="ChEBI" id="CHEBI:11851"/>
    </ligand>
</feature>
<feature type="binding site" evidence="1">
    <location>
        <position position="46"/>
    </location>
    <ligand>
        <name>Mg(2+)</name>
        <dbReference type="ChEBI" id="CHEBI:18420"/>
    </ligand>
</feature>
<feature type="binding site" evidence="1">
    <location>
        <position position="85"/>
    </location>
    <ligand>
        <name>3-methyl-2-oxobutanoate</name>
        <dbReference type="ChEBI" id="CHEBI:11851"/>
    </ligand>
</feature>
<feature type="binding site" evidence="1">
    <location>
        <position position="85"/>
    </location>
    <ligand>
        <name>Mg(2+)</name>
        <dbReference type="ChEBI" id="CHEBI:18420"/>
    </ligand>
</feature>
<feature type="binding site" evidence="1">
    <location>
        <position position="115"/>
    </location>
    <ligand>
        <name>3-methyl-2-oxobutanoate</name>
        <dbReference type="ChEBI" id="CHEBI:11851"/>
    </ligand>
</feature>
<feature type="binding site" evidence="1">
    <location>
        <position position="117"/>
    </location>
    <ligand>
        <name>Mg(2+)</name>
        <dbReference type="ChEBI" id="CHEBI:18420"/>
    </ligand>
</feature>
<dbReference type="EC" id="2.1.2.11" evidence="1"/>
<dbReference type="EMBL" id="BX248361">
    <property type="protein sequence ID" value="CAE50881.1"/>
    <property type="molecule type" value="Genomic_DNA"/>
</dbReference>
<dbReference type="RefSeq" id="WP_010935790.1">
    <property type="nucleotide sequence ID" value="NC_002935.2"/>
</dbReference>
<dbReference type="SMR" id="Q6NEB7"/>
<dbReference type="STRING" id="257309.DIP2358"/>
<dbReference type="KEGG" id="cdi:DIP2358"/>
<dbReference type="HOGENOM" id="CLU_036645_1_0_11"/>
<dbReference type="UniPathway" id="UPA00028">
    <property type="reaction ID" value="UER00003"/>
</dbReference>
<dbReference type="Proteomes" id="UP000002198">
    <property type="component" value="Chromosome"/>
</dbReference>
<dbReference type="GO" id="GO:0005737">
    <property type="term" value="C:cytoplasm"/>
    <property type="evidence" value="ECO:0007669"/>
    <property type="project" value="UniProtKB-SubCell"/>
</dbReference>
<dbReference type="GO" id="GO:0003864">
    <property type="term" value="F:3-methyl-2-oxobutanoate hydroxymethyltransferase activity"/>
    <property type="evidence" value="ECO:0007669"/>
    <property type="project" value="UniProtKB-UniRule"/>
</dbReference>
<dbReference type="GO" id="GO:0000287">
    <property type="term" value="F:magnesium ion binding"/>
    <property type="evidence" value="ECO:0007669"/>
    <property type="project" value="TreeGrafter"/>
</dbReference>
<dbReference type="GO" id="GO:0015940">
    <property type="term" value="P:pantothenate biosynthetic process"/>
    <property type="evidence" value="ECO:0007669"/>
    <property type="project" value="UniProtKB-UniRule"/>
</dbReference>
<dbReference type="CDD" id="cd06557">
    <property type="entry name" value="KPHMT-like"/>
    <property type="match status" value="1"/>
</dbReference>
<dbReference type="FunFam" id="3.20.20.60:FF:000003">
    <property type="entry name" value="3-methyl-2-oxobutanoate hydroxymethyltransferase"/>
    <property type="match status" value="1"/>
</dbReference>
<dbReference type="Gene3D" id="3.20.20.60">
    <property type="entry name" value="Phosphoenolpyruvate-binding domains"/>
    <property type="match status" value="1"/>
</dbReference>
<dbReference type="HAMAP" id="MF_00156">
    <property type="entry name" value="PanB"/>
    <property type="match status" value="1"/>
</dbReference>
<dbReference type="InterPro" id="IPR003700">
    <property type="entry name" value="Pantoate_hydroxy_MeTrfase"/>
</dbReference>
<dbReference type="InterPro" id="IPR015813">
    <property type="entry name" value="Pyrv/PenolPyrv_kinase-like_dom"/>
</dbReference>
<dbReference type="InterPro" id="IPR040442">
    <property type="entry name" value="Pyrv_kinase-like_dom_sf"/>
</dbReference>
<dbReference type="NCBIfam" id="TIGR00222">
    <property type="entry name" value="panB"/>
    <property type="match status" value="1"/>
</dbReference>
<dbReference type="NCBIfam" id="NF001452">
    <property type="entry name" value="PRK00311.1"/>
    <property type="match status" value="1"/>
</dbReference>
<dbReference type="PANTHER" id="PTHR20881">
    <property type="entry name" value="3-METHYL-2-OXOBUTANOATE HYDROXYMETHYLTRANSFERASE"/>
    <property type="match status" value="1"/>
</dbReference>
<dbReference type="PANTHER" id="PTHR20881:SF0">
    <property type="entry name" value="3-METHYL-2-OXOBUTANOATE HYDROXYMETHYLTRANSFERASE"/>
    <property type="match status" value="1"/>
</dbReference>
<dbReference type="Pfam" id="PF02548">
    <property type="entry name" value="Pantoate_transf"/>
    <property type="match status" value="1"/>
</dbReference>
<dbReference type="PIRSF" id="PIRSF000388">
    <property type="entry name" value="Pantoate_hydroxy_MeTrfase"/>
    <property type="match status" value="1"/>
</dbReference>
<dbReference type="SUPFAM" id="SSF51621">
    <property type="entry name" value="Phosphoenolpyruvate/pyruvate domain"/>
    <property type="match status" value="1"/>
</dbReference>
<proteinExistence type="inferred from homology"/>
<accession>Q6NEB7</accession>
<reference key="1">
    <citation type="journal article" date="2003" name="Nucleic Acids Res.">
        <title>The complete genome sequence and analysis of Corynebacterium diphtheriae NCTC13129.</title>
        <authorList>
            <person name="Cerdeno-Tarraga A.-M."/>
            <person name="Efstratiou A."/>
            <person name="Dover L.G."/>
            <person name="Holden M.T.G."/>
            <person name="Pallen M.J."/>
            <person name="Bentley S.D."/>
            <person name="Besra G.S."/>
            <person name="Churcher C.M."/>
            <person name="James K.D."/>
            <person name="De Zoysa A."/>
            <person name="Chillingworth T."/>
            <person name="Cronin A."/>
            <person name="Dowd L."/>
            <person name="Feltwell T."/>
            <person name="Hamlin N."/>
            <person name="Holroyd S."/>
            <person name="Jagels K."/>
            <person name="Moule S."/>
            <person name="Quail M.A."/>
            <person name="Rabbinowitsch E."/>
            <person name="Rutherford K.M."/>
            <person name="Thomson N.R."/>
            <person name="Unwin L."/>
            <person name="Whitehead S."/>
            <person name="Barrell B.G."/>
            <person name="Parkhill J."/>
        </authorList>
    </citation>
    <scope>NUCLEOTIDE SEQUENCE [LARGE SCALE GENOMIC DNA]</scope>
    <source>
        <strain>ATCC 700971 / NCTC 13129 / Biotype gravis</strain>
    </source>
</reference>
<name>PANB_CORDI</name>
<protein>
    <recommendedName>
        <fullName evidence="1">3-methyl-2-oxobutanoate hydroxymethyltransferase</fullName>
        <ecNumber evidence="1">2.1.2.11</ecNumber>
    </recommendedName>
    <alternativeName>
        <fullName evidence="1">Ketopantoate hydroxymethyltransferase</fullName>
        <shortName evidence="1">KPHMT</shortName>
    </alternativeName>
</protein>
<gene>
    <name evidence="1" type="primary">panB</name>
    <name type="ordered locus">DIP2358</name>
</gene>